<comment type="interaction">
    <interactant intactId="EBI-323476">
        <id>Q21018</id>
    </interactant>
    <interactant intactId="EBI-312683">
        <id>O45799</id>
        <label>scrm-1</label>
    </interactant>
    <organismsDiffer>false</organismsDiffer>
    <experiments>3</experiments>
</comment>
<comment type="subcellular location">
    <subcellularLocation>
        <location evidence="2">Mitochondrion matrix</location>
    </subcellularLocation>
</comment>
<comment type="similarity">
    <text evidence="2">Belongs to the MAM33 family.</text>
</comment>
<evidence type="ECO:0000255" key="1"/>
<evidence type="ECO:0000305" key="2"/>
<dbReference type="EMBL" id="Z34801">
    <property type="protein sequence ID" value="CAA84328.1"/>
    <property type="molecule type" value="Genomic_DNA"/>
</dbReference>
<dbReference type="PIR" id="T22972">
    <property type="entry name" value="T22972"/>
</dbReference>
<dbReference type="RefSeq" id="NP_001379055.1">
    <property type="nucleotide sequence ID" value="NM_001393306.1"/>
</dbReference>
<dbReference type="RefSeq" id="NP_497701.1">
    <property type="nucleotide sequence ID" value="NM_065300.4"/>
</dbReference>
<dbReference type="SMR" id="Q21018"/>
<dbReference type="BioGRID" id="40683">
    <property type="interactions" value="24"/>
</dbReference>
<dbReference type="DIP" id="DIP-26630N"/>
<dbReference type="FunCoup" id="Q21018">
    <property type="interactions" value="1939"/>
</dbReference>
<dbReference type="IntAct" id="Q21018">
    <property type="interactions" value="5"/>
</dbReference>
<dbReference type="MINT" id="Q21018"/>
<dbReference type="STRING" id="6239.F59A2.3.2"/>
<dbReference type="PaxDb" id="6239-F59A2.3"/>
<dbReference type="PeptideAtlas" id="Q21018"/>
<dbReference type="EnsemblMetazoa" id="F59A2.3.1">
    <property type="protein sequence ID" value="F59A2.3.1"/>
    <property type="gene ID" value="WBGene00010303"/>
</dbReference>
<dbReference type="EnsemblMetazoa" id="F59A2.3.2">
    <property type="protein sequence ID" value="F59A2.3.2"/>
    <property type="gene ID" value="WBGene00010303"/>
</dbReference>
<dbReference type="GeneID" id="175441"/>
<dbReference type="UCSC" id="F59A2.3.1">
    <property type="organism name" value="c. elegans"/>
</dbReference>
<dbReference type="AGR" id="WB:WBGene00010303"/>
<dbReference type="WormBase" id="F59A2.3">
    <property type="protein sequence ID" value="CE17940"/>
    <property type="gene ID" value="WBGene00010303"/>
    <property type="gene designation" value="cri-3"/>
</dbReference>
<dbReference type="eggNOG" id="KOG4024">
    <property type="taxonomic scope" value="Eukaryota"/>
</dbReference>
<dbReference type="GeneTree" id="ENSGT00390000018406"/>
<dbReference type="HOGENOM" id="CLU_1176395_0_0_1"/>
<dbReference type="InParanoid" id="Q21018"/>
<dbReference type="OMA" id="YEHTAYV"/>
<dbReference type="OrthoDB" id="278212at2759"/>
<dbReference type="PhylomeDB" id="Q21018"/>
<dbReference type="Reactome" id="R-CEL-8980692">
    <property type="pathway name" value="RHOA GTPase cycle"/>
</dbReference>
<dbReference type="PRO" id="PR:Q21018"/>
<dbReference type="Proteomes" id="UP000001940">
    <property type="component" value="Chromosome III"/>
</dbReference>
<dbReference type="Bgee" id="WBGene00010303">
    <property type="expression patterns" value="Expressed in pharyngeal muscle cell (C elegans) and 4 other cell types or tissues"/>
</dbReference>
<dbReference type="GO" id="GO:0005759">
    <property type="term" value="C:mitochondrial matrix"/>
    <property type="evidence" value="ECO:0007669"/>
    <property type="project" value="UniProtKB-SubCell"/>
</dbReference>
<dbReference type="GO" id="GO:0042256">
    <property type="term" value="P:cytosolic ribosome assembly"/>
    <property type="evidence" value="ECO:0000318"/>
    <property type="project" value="GO_Central"/>
</dbReference>
<dbReference type="FunFam" id="3.10.280.10:FF:000005">
    <property type="entry name" value="Glycoprotein gC1qBP, putative"/>
    <property type="match status" value="1"/>
</dbReference>
<dbReference type="Gene3D" id="3.10.280.10">
    <property type="entry name" value="Mitochondrial glycoprotein"/>
    <property type="match status" value="1"/>
</dbReference>
<dbReference type="InterPro" id="IPR003428">
    <property type="entry name" value="MAM33"/>
</dbReference>
<dbReference type="InterPro" id="IPR036561">
    <property type="entry name" value="MAM33_sf"/>
</dbReference>
<dbReference type="PANTHER" id="PTHR10826">
    <property type="entry name" value="COMPLEMENT COMPONENT 1"/>
    <property type="match status" value="1"/>
</dbReference>
<dbReference type="PANTHER" id="PTHR10826:SF1">
    <property type="entry name" value="COMPLEMENT COMPONENT 1 Q SUBCOMPONENT-BINDING PROTEIN, MITOCHONDRIAL"/>
    <property type="match status" value="1"/>
</dbReference>
<dbReference type="Pfam" id="PF02330">
    <property type="entry name" value="MAM33"/>
    <property type="match status" value="1"/>
</dbReference>
<dbReference type="SUPFAM" id="SSF54529">
    <property type="entry name" value="Mitochondrial glycoprotein MAM33-like"/>
    <property type="match status" value="1"/>
</dbReference>
<sequence>MNTASLVRSLSRVALRSSQVVRMAAPRHFSQSAKVLSVTPELQQALNREIEAEQQLSSDNLQGAVAPTFAGFQVTNKDAEVRLTKKNGSEDILVVFNVNHSVDMDEGFDDEPSQAVAPVPVAMPPFTVEITKGDQRLCFHLELVPVDDQPDEYDFRVEEFYVAPSAKNGNEDVPSEVYASSGKYIDPDLHDLLFVRYLEERGLDARFCKTLVAYATHYEHSQYVGLLDKIKKFISK</sequence>
<keyword id="KW-0496">Mitochondrion</keyword>
<keyword id="KW-1185">Reference proteome</keyword>
<keyword id="KW-0809">Transit peptide</keyword>
<accession>Q21018</accession>
<gene>
    <name type="primary">cri-3</name>
    <name type="ORF">F59A2.3</name>
</gene>
<proteinExistence type="evidence at protein level"/>
<feature type="transit peptide" description="Mitochondrion" evidence="1">
    <location>
        <begin position="1"/>
        <end position="36"/>
    </location>
</feature>
<feature type="chain" id="PRO_0000018593" description="Conserved regulator of innate immunity protein 3">
    <location>
        <begin position="37"/>
        <end position="236"/>
    </location>
</feature>
<reference key="1">
    <citation type="journal article" date="1998" name="Science">
        <title>Genome sequence of the nematode C. elegans: a platform for investigating biology.</title>
        <authorList>
            <consortium name="The C. elegans sequencing consortium"/>
        </authorList>
    </citation>
    <scope>NUCLEOTIDE SEQUENCE [LARGE SCALE GENOMIC DNA]</scope>
    <source>
        <strain>Bristol N2</strain>
    </source>
</reference>
<protein>
    <recommendedName>
        <fullName>Conserved regulator of innate immunity protein 3</fullName>
    </recommendedName>
</protein>
<organism>
    <name type="scientific">Caenorhabditis elegans</name>
    <dbReference type="NCBI Taxonomy" id="6239"/>
    <lineage>
        <taxon>Eukaryota</taxon>
        <taxon>Metazoa</taxon>
        <taxon>Ecdysozoa</taxon>
        <taxon>Nematoda</taxon>
        <taxon>Chromadorea</taxon>
        <taxon>Rhabditida</taxon>
        <taxon>Rhabditina</taxon>
        <taxon>Rhabditomorpha</taxon>
        <taxon>Rhabditoidea</taxon>
        <taxon>Rhabditidae</taxon>
        <taxon>Peloderinae</taxon>
        <taxon>Caenorhabditis</taxon>
    </lineage>
</organism>
<name>CRI3_CAEEL</name>